<organism>
    <name type="scientific">Dictyostelium discoideum</name>
    <name type="common">Social amoeba</name>
    <dbReference type="NCBI Taxonomy" id="44689"/>
    <lineage>
        <taxon>Eukaryota</taxon>
        <taxon>Amoebozoa</taxon>
        <taxon>Evosea</taxon>
        <taxon>Eumycetozoa</taxon>
        <taxon>Dictyostelia</taxon>
        <taxon>Dictyosteliales</taxon>
        <taxon>Dictyosteliaceae</taxon>
        <taxon>Dictyostelium</taxon>
    </lineage>
</organism>
<protein>
    <recommendedName>
        <fullName>Expansin-like protein 1</fullName>
        <shortName>Ddexpl1</shortName>
    </recommendedName>
</protein>
<name>EXPL1_DICDI</name>
<feature type="signal peptide" evidence="1">
    <location>
        <begin position="1"/>
        <end position="21"/>
    </location>
</feature>
<feature type="chain" id="PRO_0000368215" description="Expansin-like protein 1">
    <location>
        <begin position="22"/>
        <end position="286"/>
    </location>
</feature>
<feature type="topological domain" description="Extracellular" evidence="1">
    <location>
        <begin position="22"/>
        <end position="265"/>
    </location>
</feature>
<feature type="transmembrane region" description="Helical" evidence="1">
    <location>
        <begin position="266"/>
        <end position="286"/>
    </location>
</feature>
<feature type="domain" description="Expansin-like EG45" evidence="2">
    <location>
        <begin position="44"/>
        <end position="145"/>
    </location>
</feature>
<feature type="glycosylation site" description="N-linked (GlcNAc...) asparagine" evidence="1">
    <location>
        <position position="82"/>
    </location>
</feature>
<feature type="glycosylation site" description="N-linked (GlcNAc...) asparagine" evidence="1">
    <location>
        <position position="89"/>
    </location>
</feature>
<feature type="disulfide bond" evidence="2">
    <location>
        <begin position="47"/>
        <end position="77"/>
    </location>
</feature>
<feature type="disulfide bond" evidence="2">
    <location>
        <begin position="80"/>
        <end position="140"/>
    </location>
</feature>
<accession>Q55G31</accession>
<dbReference type="EMBL" id="AAFI02000003">
    <property type="protein sequence ID" value="EAL73376.1"/>
    <property type="molecule type" value="Genomic_DNA"/>
</dbReference>
<dbReference type="RefSeq" id="XP_647352.1">
    <property type="nucleotide sequence ID" value="XM_642260.1"/>
</dbReference>
<dbReference type="SMR" id="Q55G31"/>
<dbReference type="STRING" id="44689.Q55G31"/>
<dbReference type="GlyCosmos" id="Q55G31">
    <property type="glycosylation" value="2 sites, No reported glycans"/>
</dbReference>
<dbReference type="GlyGen" id="Q55G31">
    <property type="glycosylation" value="2 sites"/>
</dbReference>
<dbReference type="PaxDb" id="44689-DDB0231629"/>
<dbReference type="EnsemblProtists" id="EAL73376">
    <property type="protein sequence ID" value="EAL73376"/>
    <property type="gene ID" value="DDB_G0267846"/>
</dbReference>
<dbReference type="GeneID" id="8616163"/>
<dbReference type="KEGG" id="ddi:DDB_G0267846"/>
<dbReference type="dictyBase" id="DDB_G0267846">
    <property type="gene designation" value="expl1"/>
</dbReference>
<dbReference type="VEuPathDB" id="AmoebaDB:DDB_G0267846"/>
<dbReference type="eggNOG" id="ENOG502S9SU">
    <property type="taxonomic scope" value="Eukaryota"/>
</dbReference>
<dbReference type="HOGENOM" id="CLU_071727_0_0_1"/>
<dbReference type="InParanoid" id="Q55G31"/>
<dbReference type="OMA" id="DYNHFVS"/>
<dbReference type="PhylomeDB" id="Q55G31"/>
<dbReference type="PRO" id="PR:Q55G31"/>
<dbReference type="Proteomes" id="UP000002195">
    <property type="component" value="Chromosome 1"/>
</dbReference>
<dbReference type="GO" id="GO:0016020">
    <property type="term" value="C:membrane"/>
    <property type="evidence" value="ECO:0007669"/>
    <property type="project" value="UniProtKB-SubCell"/>
</dbReference>
<dbReference type="CDD" id="cd22271">
    <property type="entry name" value="DPBB_EXP_N-like"/>
    <property type="match status" value="1"/>
</dbReference>
<dbReference type="Gene3D" id="2.60.40.760">
    <property type="entry name" value="Expansin, cellulose-binding-like domain"/>
    <property type="match status" value="1"/>
</dbReference>
<dbReference type="Gene3D" id="2.40.40.10">
    <property type="entry name" value="RlpA-like domain"/>
    <property type="match status" value="1"/>
</dbReference>
<dbReference type="InterPro" id="IPR007112">
    <property type="entry name" value="Expansin/allergen_DPBB_dom"/>
</dbReference>
<dbReference type="InterPro" id="IPR036749">
    <property type="entry name" value="Expansin_CBD_sf"/>
</dbReference>
<dbReference type="InterPro" id="IPR051477">
    <property type="entry name" value="Expansin_CellWall"/>
</dbReference>
<dbReference type="InterPro" id="IPR049818">
    <property type="entry name" value="Expansin_EXLX1-like"/>
</dbReference>
<dbReference type="InterPro" id="IPR009009">
    <property type="entry name" value="RlpA-like_DPBB"/>
</dbReference>
<dbReference type="InterPro" id="IPR036908">
    <property type="entry name" value="RlpA-like_sf"/>
</dbReference>
<dbReference type="NCBIfam" id="NF041144">
    <property type="entry name" value="expansin_EXLX1"/>
    <property type="match status" value="1"/>
</dbReference>
<dbReference type="PANTHER" id="PTHR31836">
    <property type="match status" value="1"/>
</dbReference>
<dbReference type="PANTHER" id="PTHR31836:SF19">
    <property type="entry name" value="EXPANSIN-LIKE PROTEIN 1"/>
    <property type="match status" value="1"/>
</dbReference>
<dbReference type="Pfam" id="PF03330">
    <property type="entry name" value="DPBB_1"/>
    <property type="match status" value="1"/>
</dbReference>
<dbReference type="SMART" id="SM00837">
    <property type="entry name" value="DPBB_1"/>
    <property type="match status" value="1"/>
</dbReference>
<dbReference type="SUPFAM" id="SSF50685">
    <property type="entry name" value="Barwin-like endoglucanases"/>
    <property type="match status" value="1"/>
</dbReference>
<dbReference type="SUPFAM" id="SSF49590">
    <property type="entry name" value="PHL pollen allergen"/>
    <property type="match status" value="1"/>
</dbReference>
<dbReference type="PROSITE" id="PS50842">
    <property type="entry name" value="EXPANSIN_EG45"/>
    <property type="match status" value="1"/>
</dbReference>
<comment type="function">
    <text evidence="3 4">May serve to lubricate the movement of the cellulose microfibrils during cell growth and wall extension and/or they may serve to maintain the fluid state of the slug cell wall.</text>
</comment>
<comment type="subcellular location">
    <subcellularLocation>
        <location evidence="5">Membrane</location>
        <topology evidence="5">Single-pass type I membrane protein</topology>
    </subcellularLocation>
</comment>
<comment type="developmental stage">
    <text evidence="4">Expressed at substantial levels throughout development with some slight variations.</text>
</comment>
<comment type="similarity">
    <text evidence="5">Belongs to the expansin family. Expansin A subfamily.</text>
</comment>
<proteinExistence type="evidence at transcript level"/>
<reference key="1">
    <citation type="journal article" date="2005" name="Nature">
        <title>The genome of the social amoeba Dictyostelium discoideum.</title>
        <authorList>
            <person name="Eichinger L."/>
            <person name="Pachebat J.A."/>
            <person name="Gloeckner G."/>
            <person name="Rajandream M.A."/>
            <person name="Sucgang R."/>
            <person name="Berriman M."/>
            <person name="Song J."/>
            <person name="Olsen R."/>
            <person name="Szafranski K."/>
            <person name="Xu Q."/>
            <person name="Tunggal B."/>
            <person name="Kummerfeld S."/>
            <person name="Madera M."/>
            <person name="Konfortov B.A."/>
            <person name="Rivero F."/>
            <person name="Bankier A.T."/>
            <person name="Lehmann R."/>
            <person name="Hamlin N."/>
            <person name="Davies R."/>
            <person name="Gaudet P."/>
            <person name="Fey P."/>
            <person name="Pilcher K."/>
            <person name="Chen G."/>
            <person name="Saunders D."/>
            <person name="Sodergren E.J."/>
            <person name="Davis P."/>
            <person name="Kerhornou A."/>
            <person name="Nie X."/>
            <person name="Hall N."/>
            <person name="Anjard C."/>
            <person name="Hemphill L."/>
            <person name="Bason N."/>
            <person name="Farbrother P."/>
            <person name="Desany B."/>
            <person name="Just E."/>
            <person name="Morio T."/>
            <person name="Rost R."/>
            <person name="Churcher C.M."/>
            <person name="Cooper J."/>
            <person name="Haydock S."/>
            <person name="van Driessche N."/>
            <person name="Cronin A."/>
            <person name="Goodhead I."/>
            <person name="Muzny D.M."/>
            <person name="Mourier T."/>
            <person name="Pain A."/>
            <person name="Lu M."/>
            <person name="Harper D."/>
            <person name="Lindsay R."/>
            <person name="Hauser H."/>
            <person name="James K.D."/>
            <person name="Quiles M."/>
            <person name="Madan Babu M."/>
            <person name="Saito T."/>
            <person name="Buchrieser C."/>
            <person name="Wardroper A."/>
            <person name="Felder M."/>
            <person name="Thangavelu M."/>
            <person name="Johnson D."/>
            <person name="Knights A."/>
            <person name="Loulseged H."/>
            <person name="Mungall K.L."/>
            <person name="Oliver K."/>
            <person name="Price C."/>
            <person name="Quail M.A."/>
            <person name="Urushihara H."/>
            <person name="Hernandez J."/>
            <person name="Rabbinowitsch E."/>
            <person name="Steffen D."/>
            <person name="Sanders M."/>
            <person name="Ma J."/>
            <person name="Kohara Y."/>
            <person name="Sharp S."/>
            <person name="Simmonds M.N."/>
            <person name="Spiegler S."/>
            <person name="Tivey A."/>
            <person name="Sugano S."/>
            <person name="White B."/>
            <person name="Walker D."/>
            <person name="Woodward J.R."/>
            <person name="Winckler T."/>
            <person name="Tanaka Y."/>
            <person name="Shaulsky G."/>
            <person name="Schleicher M."/>
            <person name="Weinstock G.M."/>
            <person name="Rosenthal A."/>
            <person name="Cox E.C."/>
            <person name="Chisholm R.L."/>
            <person name="Gibbs R.A."/>
            <person name="Loomis W.F."/>
            <person name="Platzer M."/>
            <person name="Kay R.R."/>
            <person name="Williams J.G."/>
            <person name="Dear P.H."/>
            <person name="Noegel A.A."/>
            <person name="Barrell B.G."/>
            <person name="Kuspa A."/>
        </authorList>
    </citation>
    <scope>NUCLEOTIDE SEQUENCE [LARGE SCALE GENOMIC DNA]</scope>
    <source>
        <strain>AX4</strain>
    </source>
</reference>
<reference key="2">
    <citation type="journal article" date="2003" name="FEBS Lett.">
        <title>Expression of a family of expansin-like proteins during the development of Dictyostelium discoideum.</title>
        <authorList>
            <person name="Darley C.P."/>
            <person name="Li Y."/>
            <person name="Schaap P."/>
            <person name="McQueen-Mason S.J."/>
        </authorList>
    </citation>
    <scope>DEVELOPMENTAL STAGE</scope>
    <scope>FUNCTION</scope>
</reference>
<reference key="3">
    <citation type="journal article" date="2002" name="Plant Physiol.">
        <title>Plant expansins are a complex multigene family with an ancient evolutionary origin.</title>
        <authorList>
            <person name="Li Y."/>
            <person name="Darley C.P."/>
            <person name="Ongaro V."/>
            <person name="Fleming A."/>
            <person name="Schipper O."/>
            <person name="Baldauf S.L."/>
            <person name="McQueen-Mason S.J."/>
        </authorList>
    </citation>
    <scope>FUNCTION</scope>
</reference>
<reference key="4">
    <citation type="journal article" date="2008" name="BMC Genomics">
        <title>Genome-wide transcriptional changes induced by phagocytosis or growth on bacteria in Dictyostelium.</title>
        <authorList>
            <person name="Sillo A."/>
            <person name="Bloomfield G."/>
            <person name="Balest A."/>
            <person name="Balbo A."/>
            <person name="Pergolizzi B."/>
            <person name="Peracino B."/>
            <person name="Skelton J."/>
            <person name="Ivens A."/>
            <person name="Bozzaro S."/>
        </authorList>
    </citation>
    <scope>IDENTIFICATION</scope>
</reference>
<keyword id="KW-1015">Disulfide bond</keyword>
<keyword id="KW-0325">Glycoprotein</keyword>
<keyword id="KW-0472">Membrane</keyword>
<keyword id="KW-1185">Reference proteome</keyword>
<keyword id="KW-0732">Signal</keyword>
<keyword id="KW-0812">Transmembrane</keyword>
<keyword id="KW-1133">Transmembrane helix</keyword>
<evidence type="ECO:0000255" key="1"/>
<evidence type="ECO:0000255" key="2">
    <source>
        <dbReference type="PROSITE-ProRule" id="PRU00079"/>
    </source>
</evidence>
<evidence type="ECO:0000269" key="3">
    <source>
    </source>
</evidence>
<evidence type="ECO:0000269" key="4">
    <source>
    </source>
</evidence>
<evidence type="ECO:0000305" key="5"/>
<gene>
    <name type="primary">expl1</name>
    <name type="ORF">DDB_G0267846</name>
</gene>
<sequence length="286" mass="30606">MKTFVLFVILLCLTFLSISKSETCPFSQSLVSGASATYYTDPNAGNCGYENLMGPLGPGNLFIAALGPNLYNNGKNCGQCFNISSPYTNRSVVIMATDSCPDSGYCQRSSHFDLSTQAFDVLGAQSIGVLEGLTYYKVPCGVNGNVKIMMKDGSNDYWTAFLIYNSKVTIKDVSVKITGKSTYTSLTQSSYNYWISPNMVPGSFDVRIESVGGEFIYITIPKVESRKQYETSSQFSVDGCVGTPSGPSGGLGSPSTGASIGTPSDASSLTLYALFSLTILFLVMLN</sequence>